<protein>
    <recommendedName>
        <fullName evidence="1">ATPase GET3</fullName>
        <ecNumber evidence="1">3.6.-.-</ecNumber>
    </recommendedName>
    <alternativeName>
        <fullName evidence="1">Arsenical pump-driving ATPase</fullName>
    </alternativeName>
    <alternativeName>
        <fullName evidence="1">Arsenite-stimulated ATPase</fullName>
    </alternativeName>
    <alternativeName>
        <fullName evidence="1">Golgi to ER traffic protein 3</fullName>
    </alternativeName>
    <alternativeName>
        <fullName evidence="1">Guided entry of tail-anchored proteins 3</fullName>
    </alternativeName>
</protein>
<evidence type="ECO:0000255" key="1">
    <source>
        <dbReference type="HAMAP-Rule" id="MF_03112"/>
    </source>
</evidence>
<sequence length="325" mass="36179">MSDLEPLDPTLQNILDQKSLKWIFCGGKGGVGKTTTSCSLAVQLAACRESVLLISTDPAHNLSDAFSQKFGKDATKVNGFDNLYAMEIDPNGSLQEMIESSDQTGGMGGMMQDLAFAIPGVDEAMGFAEIMKHVKSMEFSVIVFDTAPTGHTLRFLSFPSVLEKALGKLSTLGGKFGPMIQQMQSMFGGGAPQEDMFAKLESMREIITEVNNQFKDPEKTTFVCVCISEFLSLYETERLIQELTSYEIDTHNIVVNQLLFPKAGDNCEQCSVRHNMQQKYLKEAYDLYEDEFHIVKLPLLTEEVRGVEKIKEFSKMLTQPYTPPQ</sequence>
<feature type="chain" id="PRO_0000388205" description="ATPase GET3">
    <location>
        <begin position="1"/>
        <end position="325"/>
    </location>
</feature>
<feature type="active site" evidence="1">
    <location>
        <position position="57"/>
    </location>
</feature>
<feature type="binding site" evidence="1">
    <location>
        <begin position="28"/>
        <end position="35"/>
    </location>
    <ligand>
        <name>ATP</name>
        <dbReference type="ChEBI" id="CHEBI:30616"/>
    </ligand>
</feature>
<feature type="binding site" evidence="1">
    <location>
        <position position="229"/>
    </location>
    <ligand>
        <name>ATP</name>
        <dbReference type="ChEBI" id="CHEBI:30616"/>
    </ligand>
</feature>
<feature type="binding site" evidence="1">
    <location>
        <position position="256"/>
    </location>
    <ligand>
        <name>ATP</name>
        <dbReference type="ChEBI" id="CHEBI:30616"/>
    </ligand>
</feature>
<feature type="binding site" evidence="1">
    <location>
        <position position="267"/>
    </location>
    <ligand>
        <name>Zn(2+)</name>
        <dbReference type="ChEBI" id="CHEBI:29105"/>
        <note>ligand shared between dimeric partners</note>
    </ligand>
</feature>
<feature type="binding site" evidence="1">
    <location>
        <position position="270"/>
    </location>
    <ligand>
        <name>Zn(2+)</name>
        <dbReference type="ChEBI" id="CHEBI:29105"/>
        <note>ligand shared between dimeric partners</note>
    </ligand>
</feature>
<organism>
    <name type="scientific">Cryptococcus neoformans var. neoformans serotype D (strain JEC21 / ATCC MYA-565)</name>
    <name type="common">Filobasidiella neoformans</name>
    <dbReference type="NCBI Taxonomy" id="214684"/>
    <lineage>
        <taxon>Eukaryota</taxon>
        <taxon>Fungi</taxon>
        <taxon>Dikarya</taxon>
        <taxon>Basidiomycota</taxon>
        <taxon>Agaricomycotina</taxon>
        <taxon>Tremellomycetes</taxon>
        <taxon>Tremellales</taxon>
        <taxon>Cryptococcaceae</taxon>
        <taxon>Cryptococcus</taxon>
        <taxon>Cryptococcus neoformans species complex</taxon>
    </lineage>
</organism>
<dbReference type="EC" id="3.6.-.-" evidence="1"/>
<dbReference type="EMBL" id="AE017351">
    <property type="protein sequence ID" value="AAW46346.1"/>
    <property type="molecule type" value="Genomic_DNA"/>
</dbReference>
<dbReference type="RefSeq" id="XP_567863.1">
    <property type="nucleotide sequence ID" value="XM_567863.1"/>
</dbReference>
<dbReference type="SMR" id="P0CM24"/>
<dbReference type="FunCoup" id="P0CM24">
    <property type="interactions" value="545"/>
</dbReference>
<dbReference type="STRING" id="214684.P0CM24"/>
<dbReference type="PaxDb" id="214684-P0CM24"/>
<dbReference type="EnsemblFungi" id="AAW46346">
    <property type="protein sequence ID" value="AAW46346"/>
    <property type="gene ID" value="CNK02640"/>
</dbReference>
<dbReference type="GeneID" id="3254436"/>
<dbReference type="KEGG" id="cne:CNK02640"/>
<dbReference type="VEuPathDB" id="FungiDB:CNK02640"/>
<dbReference type="eggNOG" id="KOG2825">
    <property type="taxonomic scope" value="Eukaryota"/>
</dbReference>
<dbReference type="HOGENOM" id="CLU_040761_0_0_1"/>
<dbReference type="InParanoid" id="P0CM24"/>
<dbReference type="OMA" id="MDAPYEF"/>
<dbReference type="OrthoDB" id="1770at2759"/>
<dbReference type="Proteomes" id="UP000002149">
    <property type="component" value="Chromosome 11"/>
</dbReference>
<dbReference type="GO" id="GO:0043529">
    <property type="term" value="C:GET complex"/>
    <property type="evidence" value="ECO:0000318"/>
    <property type="project" value="GO_Central"/>
</dbReference>
<dbReference type="GO" id="GO:0005524">
    <property type="term" value="F:ATP binding"/>
    <property type="evidence" value="ECO:0007669"/>
    <property type="project" value="UniProtKB-UniRule"/>
</dbReference>
<dbReference type="GO" id="GO:0016887">
    <property type="term" value="F:ATP hydrolysis activity"/>
    <property type="evidence" value="ECO:0000318"/>
    <property type="project" value="GO_Central"/>
</dbReference>
<dbReference type="GO" id="GO:0046872">
    <property type="term" value="F:metal ion binding"/>
    <property type="evidence" value="ECO:0007669"/>
    <property type="project" value="UniProtKB-KW"/>
</dbReference>
<dbReference type="GO" id="GO:0071816">
    <property type="term" value="P:tail-anchored membrane protein insertion into ER membrane"/>
    <property type="evidence" value="ECO:0000318"/>
    <property type="project" value="GO_Central"/>
</dbReference>
<dbReference type="CDD" id="cd02035">
    <property type="entry name" value="ArsA"/>
    <property type="match status" value="1"/>
</dbReference>
<dbReference type="FunFam" id="3.40.50.300:FF:000235">
    <property type="entry name" value="ATPase ASNA1"/>
    <property type="match status" value="1"/>
</dbReference>
<dbReference type="Gene3D" id="3.40.50.300">
    <property type="entry name" value="P-loop containing nucleotide triphosphate hydrolases"/>
    <property type="match status" value="1"/>
</dbReference>
<dbReference type="HAMAP" id="MF_03112">
    <property type="entry name" value="Asna1_Get3"/>
    <property type="match status" value="1"/>
</dbReference>
<dbReference type="InterPro" id="IPR025723">
    <property type="entry name" value="Anion-transp_ATPase-like_dom"/>
</dbReference>
<dbReference type="InterPro" id="IPR016300">
    <property type="entry name" value="ATPase_ArsA/GET3"/>
</dbReference>
<dbReference type="InterPro" id="IPR027542">
    <property type="entry name" value="ATPase_ArsA/GET3_euk"/>
</dbReference>
<dbReference type="InterPro" id="IPR027417">
    <property type="entry name" value="P-loop_NTPase"/>
</dbReference>
<dbReference type="NCBIfam" id="TIGR00345">
    <property type="entry name" value="GET3_arsA_TRC40"/>
    <property type="match status" value="1"/>
</dbReference>
<dbReference type="PANTHER" id="PTHR10803">
    <property type="entry name" value="ARSENICAL PUMP-DRIVING ATPASE ARSENITE-TRANSLOCATING ATPASE"/>
    <property type="match status" value="1"/>
</dbReference>
<dbReference type="PANTHER" id="PTHR10803:SF3">
    <property type="entry name" value="ATPASE GET3"/>
    <property type="match status" value="1"/>
</dbReference>
<dbReference type="Pfam" id="PF02374">
    <property type="entry name" value="ArsA_ATPase"/>
    <property type="match status" value="1"/>
</dbReference>
<dbReference type="SUPFAM" id="SSF52540">
    <property type="entry name" value="P-loop containing nucleoside triphosphate hydrolases"/>
    <property type="match status" value="1"/>
</dbReference>
<accession>P0CM24</accession>
<accession>Q55K96</accession>
<accession>Q5K9A4</accession>
<comment type="function">
    <text evidence="1">ATPase required for the post-translational delivery of tail-anchored (TA) proteins to the endoplasmic reticulum. Recognizes and selectively binds the transmembrane domain of TA proteins in the cytosol. This complex then targets to the endoplasmic reticulum by membrane-bound receptors, where the tail-anchored protein is released for insertion. This process is regulated by ATP binding and hydrolysis. ATP binding drives the homodimer towards the closed dimer state, facilitating recognition of newly synthesized TA membrane proteins. ATP hydrolysis is required for insertion. Subsequently, the homodimer reverts towards the open dimer state, lowering its affinity for the membrane-bound receptor, and returning it to the cytosol to initiate a new round of targeting.</text>
</comment>
<comment type="subunit">
    <text evidence="1">Homodimer.</text>
</comment>
<comment type="subcellular location">
    <subcellularLocation>
        <location evidence="1">Cytoplasm</location>
    </subcellularLocation>
    <subcellularLocation>
        <location evidence="1">Endoplasmic reticulum</location>
    </subcellularLocation>
</comment>
<comment type="similarity">
    <text evidence="1">Belongs to the arsA ATPase family.</text>
</comment>
<name>GET3_CRYNJ</name>
<reference key="1">
    <citation type="journal article" date="2005" name="Science">
        <title>The genome of the basidiomycetous yeast and human pathogen Cryptococcus neoformans.</title>
        <authorList>
            <person name="Loftus B.J."/>
            <person name="Fung E."/>
            <person name="Roncaglia P."/>
            <person name="Rowley D."/>
            <person name="Amedeo P."/>
            <person name="Bruno D."/>
            <person name="Vamathevan J."/>
            <person name="Miranda M."/>
            <person name="Anderson I.J."/>
            <person name="Fraser J.A."/>
            <person name="Allen J.E."/>
            <person name="Bosdet I.E."/>
            <person name="Brent M.R."/>
            <person name="Chiu R."/>
            <person name="Doering T.L."/>
            <person name="Donlin M.J."/>
            <person name="D'Souza C.A."/>
            <person name="Fox D.S."/>
            <person name="Grinberg V."/>
            <person name="Fu J."/>
            <person name="Fukushima M."/>
            <person name="Haas B.J."/>
            <person name="Huang J.C."/>
            <person name="Janbon G."/>
            <person name="Jones S.J.M."/>
            <person name="Koo H.L."/>
            <person name="Krzywinski M.I."/>
            <person name="Kwon-Chung K.J."/>
            <person name="Lengeler K.B."/>
            <person name="Maiti R."/>
            <person name="Marra M.A."/>
            <person name="Marra R.E."/>
            <person name="Mathewson C.A."/>
            <person name="Mitchell T.G."/>
            <person name="Pertea M."/>
            <person name="Riggs F.R."/>
            <person name="Salzberg S.L."/>
            <person name="Schein J.E."/>
            <person name="Shvartsbeyn A."/>
            <person name="Shin H."/>
            <person name="Shumway M."/>
            <person name="Specht C.A."/>
            <person name="Suh B.B."/>
            <person name="Tenney A."/>
            <person name="Utterback T.R."/>
            <person name="Wickes B.L."/>
            <person name="Wortman J.R."/>
            <person name="Wye N.H."/>
            <person name="Kronstad J.W."/>
            <person name="Lodge J.K."/>
            <person name="Heitman J."/>
            <person name="Davis R.W."/>
            <person name="Fraser C.M."/>
            <person name="Hyman R.W."/>
        </authorList>
    </citation>
    <scope>NUCLEOTIDE SEQUENCE [LARGE SCALE GENOMIC DNA]</scope>
    <source>
        <strain>JEC21 / ATCC MYA-565</strain>
    </source>
</reference>
<proteinExistence type="inferred from homology"/>
<gene>
    <name evidence="1" type="primary">GET3</name>
    <name type="ordered locus">CNK02640</name>
</gene>
<keyword id="KW-0067">ATP-binding</keyword>
<keyword id="KW-0963">Cytoplasm</keyword>
<keyword id="KW-0256">Endoplasmic reticulum</keyword>
<keyword id="KW-0378">Hydrolase</keyword>
<keyword id="KW-0479">Metal-binding</keyword>
<keyword id="KW-0547">Nucleotide-binding</keyword>
<keyword id="KW-1185">Reference proteome</keyword>
<keyword id="KW-0813">Transport</keyword>
<keyword id="KW-0862">Zinc</keyword>